<proteinExistence type="predicted"/>
<sequence>MANNMSSRQACHAARYVVARVLRGLFWCLKYTVILPLATMALMALFVLWKDNTTPGKLLVKEINFVRQTAPAGQFPVSECWFSSSDSSGRSEIQGICHYRAADAADYVRETDRSLMQLVTALWATLALMYVSLAAITGKYPVRPGKMKCIRVVTADEHLKEVYTEDASLPGKIRKCPVYLPDDRTNRNNGDKNEHA</sequence>
<reference key="1">
    <citation type="journal article" date="1994" name="Microbiol. Rev.">
        <title>Analysis of the sequence and gene products of the transfer region of the F sex factor.</title>
        <authorList>
            <person name="Frost L.S."/>
            <person name="Ippen-Ihler K."/>
            <person name="Skurray R.A."/>
        </authorList>
    </citation>
    <scope>NUCLEOTIDE SEQUENCE [GENOMIC DNA]</scope>
</reference>
<reference key="2">
    <citation type="submission" date="2000-04" db="EMBL/GenBank/DDBJ databases">
        <title>Complete nucleotide sequence of the F plasmid: its implications for organization and diversification of plasmid genomes.</title>
        <authorList>
            <person name="Shimizu H."/>
            <person name="Saitoh Y."/>
            <person name="Suda Y."/>
            <person name="Uehara K."/>
            <person name="Sampei G."/>
            <person name="Mizobuchi K."/>
        </authorList>
    </citation>
    <scope>NUCLEOTIDE SEQUENCE [LARGE SCALE GENOMIC DNA]</scope>
    <source>
        <strain>K12 / CR63</strain>
    </source>
</reference>
<keyword id="KW-0614">Plasmid</keyword>
<geneLocation type="plasmid">
    <name>F</name>
</geneLocation>
<gene>
    <name type="primary">traP</name>
    <name type="ordered locus">ECOK12F079</name>
</gene>
<organism>
    <name type="scientific">Escherichia coli (strain K12)</name>
    <dbReference type="NCBI Taxonomy" id="83333"/>
    <lineage>
        <taxon>Bacteria</taxon>
        <taxon>Pseudomonadati</taxon>
        <taxon>Pseudomonadota</taxon>
        <taxon>Gammaproteobacteria</taxon>
        <taxon>Enterobacterales</taxon>
        <taxon>Enterobacteriaceae</taxon>
        <taxon>Escherichia</taxon>
    </lineage>
</organism>
<dbReference type="EMBL" id="U01159">
    <property type="protein sequence ID" value="AAC44193.1"/>
    <property type="molecule type" value="Genomic_DNA"/>
</dbReference>
<dbReference type="EMBL" id="AP001918">
    <property type="protein sequence ID" value="BAA97949.1"/>
    <property type="molecule type" value="Genomic_DNA"/>
</dbReference>
<dbReference type="RefSeq" id="NP_061458.1">
    <property type="nucleotide sequence ID" value="NC_002483.1"/>
</dbReference>
<dbReference type="RefSeq" id="NP_862924.1">
    <property type="nucleotide sequence ID" value="NC_004998.1"/>
</dbReference>
<dbReference type="RefSeq" id="WP_000002792.1">
    <property type="nucleotide sequence ID" value="NZ_JACEFS010000047.1"/>
</dbReference>
<dbReference type="RefSeq" id="YP_009060151.1">
    <property type="nucleotide sequence ID" value="NC_024956.1"/>
</dbReference>
<dbReference type="RefSeq" id="YP_009068346.1">
    <property type="nucleotide sequence ID" value="NC_025139.1"/>
</dbReference>
<dbReference type="RefSeq" id="YP_009070611.1">
    <property type="nucleotide sequence ID" value="NC_025175.1"/>
</dbReference>
<dbReference type="KEGG" id="ecoc:C3026_24500"/>
<dbReference type="PATRIC" id="fig|83333.107.peg.634"/>
<dbReference type="OrthoDB" id="9913881at2"/>
<dbReference type="PRO" id="PR:P41068"/>
<dbReference type="InterPro" id="IPR009913">
    <property type="entry name" value="TraP"/>
</dbReference>
<dbReference type="NCBIfam" id="NF010299">
    <property type="entry name" value="PRK13739.1"/>
    <property type="match status" value="1"/>
</dbReference>
<dbReference type="Pfam" id="PF07296">
    <property type="entry name" value="TraP"/>
    <property type="match status" value="1"/>
</dbReference>
<feature type="chain" id="PRO_0000068474" description="Protein TraP">
    <location>
        <begin position="1"/>
        <end position="196"/>
    </location>
</feature>
<protein>
    <recommendedName>
        <fullName>Protein TraP</fullName>
    </recommendedName>
</protein>
<name>TRAP_ECOLI</name>
<accession>P41068</accession>